<evidence type="ECO:0000255" key="1">
    <source>
        <dbReference type="HAMAP-Rule" id="MF_00275"/>
    </source>
</evidence>
<feature type="chain" id="PRO_1000190739" description="Potassium-transporting ATPase potassium-binding subunit">
    <location>
        <begin position="1"/>
        <end position="567"/>
    </location>
</feature>
<feature type="transmembrane region" description="Helical" evidence="1">
    <location>
        <begin position="11"/>
        <end position="31"/>
    </location>
</feature>
<feature type="transmembrane region" description="Helical" evidence="1">
    <location>
        <begin position="67"/>
        <end position="87"/>
    </location>
</feature>
<feature type="transmembrane region" description="Helical" evidence="1">
    <location>
        <begin position="136"/>
        <end position="156"/>
    </location>
</feature>
<feature type="transmembrane region" description="Helical" evidence="1">
    <location>
        <begin position="179"/>
        <end position="199"/>
    </location>
</feature>
<feature type="transmembrane region" description="Helical" evidence="1">
    <location>
        <begin position="255"/>
        <end position="275"/>
    </location>
</feature>
<feature type="transmembrane region" description="Helical" evidence="1">
    <location>
        <begin position="286"/>
        <end position="306"/>
    </location>
</feature>
<feature type="transmembrane region" description="Helical" evidence="1">
    <location>
        <begin position="333"/>
        <end position="353"/>
    </location>
</feature>
<feature type="transmembrane region" description="Helical" evidence="1">
    <location>
        <begin position="363"/>
        <end position="383"/>
    </location>
</feature>
<feature type="transmembrane region" description="Helical" evidence="1">
    <location>
        <begin position="385"/>
        <end position="405"/>
    </location>
</feature>
<feature type="transmembrane region" description="Helical" evidence="1">
    <location>
        <begin position="422"/>
        <end position="442"/>
    </location>
</feature>
<feature type="transmembrane region" description="Helical" evidence="1">
    <location>
        <begin position="489"/>
        <end position="509"/>
    </location>
</feature>
<feature type="transmembrane region" description="Helical" evidence="1">
    <location>
        <begin position="532"/>
        <end position="552"/>
    </location>
</feature>
<comment type="function">
    <text evidence="1">Part of the high-affinity ATP-driven potassium transport (or Kdp) system, which catalyzes the hydrolysis of ATP coupled with the electrogenic transport of potassium into the cytoplasm. This subunit binds the periplasmic potassium ions and delivers the ions to the membrane domain of KdpB through an intramembrane tunnel.</text>
</comment>
<comment type="subunit">
    <text evidence="1">The system is composed of three essential subunits: KdpA, KdpB and KdpC.</text>
</comment>
<comment type="subcellular location">
    <subcellularLocation>
        <location evidence="1">Cell inner membrane</location>
        <topology evidence="1">Multi-pass membrane protein</topology>
    </subcellularLocation>
</comment>
<comment type="similarity">
    <text evidence="1">Belongs to the KdpA family.</text>
</comment>
<proteinExistence type="inferred from homology"/>
<name>KDPA_LARHH</name>
<organism>
    <name type="scientific">Laribacter hongkongensis (strain HLHK9)</name>
    <dbReference type="NCBI Taxonomy" id="557598"/>
    <lineage>
        <taxon>Bacteria</taxon>
        <taxon>Pseudomonadati</taxon>
        <taxon>Pseudomonadota</taxon>
        <taxon>Betaproteobacteria</taxon>
        <taxon>Neisseriales</taxon>
        <taxon>Aquaspirillaceae</taxon>
        <taxon>Laribacter</taxon>
    </lineage>
</organism>
<gene>
    <name evidence="1" type="primary">kdpA</name>
    <name type="ordered locus">LHK_01572</name>
</gene>
<keyword id="KW-0997">Cell inner membrane</keyword>
<keyword id="KW-1003">Cell membrane</keyword>
<keyword id="KW-0406">Ion transport</keyword>
<keyword id="KW-0472">Membrane</keyword>
<keyword id="KW-0630">Potassium</keyword>
<keyword id="KW-0633">Potassium transport</keyword>
<keyword id="KW-1185">Reference proteome</keyword>
<keyword id="KW-0812">Transmembrane</keyword>
<keyword id="KW-1133">Transmembrane helix</keyword>
<keyword id="KW-0813">Transport</keyword>
<sequence length="567" mass="59218">MNHSAVAQTGLYLLVLLALAWPLGRYLAALLEGRLAQRFAWMGRIERGILWLMGAAPDEEMGWKRYAAAILLFNLAGVVLLFLLQRWQGMLPLNPAGLEGMSADSALNTAVSFVTNTNWQGYSGETTMSLLTQMLGLAVQNFLSAATGIAVVVALVRGFVRSGGGAIGNAWLDLLRATLWLLLPLSIVVALVLVWQGVVQNWYAGLTISSLESHTTQLLASGPVASQEAIKLLGTNGGGFFNANSAHPFENPTPFSNWVEMLSIFLVPAALVVMFGRMVGDLRQGVVLLAAMTVLFVGAFAVVYLAESQANPLLTALGAAGDSGNLEGKEVRFGVLASSLFATITTAASCGAVNAMHDSLMPLGGGMTMLLMQLGEVVFGGVGSGLYGMLLFAVLAVFMAGLMIGRTPEYLGKKIGAPEMKLVSVAILVGPLLVLAGTAIAVLTEAGRAGMANPGAHGFSEVLYAFSSAANNNGSAFAGLSANTPFYNLMLAVAMWFGRFAVIVPVLALAGSLAGKPRLAATAGTLPTHGPLFVVLLVLSVLLIGALTYIPALALGPVIDHLQLFSR</sequence>
<protein>
    <recommendedName>
        <fullName evidence="1">Potassium-transporting ATPase potassium-binding subunit</fullName>
    </recommendedName>
    <alternativeName>
        <fullName evidence="1">ATP phosphohydrolase [potassium-transporting] A chain</fullName>
    </alternativeName>
    <alternativeName>
        <fullName evidence="1">Potassium-binding and translocating subunit A</fullName>
    </alternativeName>
    <alternativeName>
        <fullName evidence="1">Potassium-translocating ATPase A chain</fullName>
    </alternativeName>
</protein>
<dbReference type="EMBL" id="CP001154">
    <property type="protein sequence ID" value="ACO74560.1"/>
    <property type="molecule type" value="Genomic_DNA"/>
</dbReference>
<dbReference type="RefSeq" id="WP_012697046.1">
    <property type="nucleotide sequence ID" value="NC_012559.1"/>
</dbReference>
<dbReference type="SMR" id="C1D7X0"/>
<dbReference type="STRING" id="557598.LHK_01572"/>
<dbReference type="GeneID" id="75109748"/>
<dbReference type="KEGG" id="lhk:LHK_01572"/>
<dbReference type="eggNOG" id="COG2060">
    <property type="taxonomic scope" value="Bacteria"/>
</dbReference>
<dbReference type="HOGENOM" id="CLU_018614_3_0_4"/>
<dbReference type="Proteomes" id="UP000002010">
    <property type="component" value="Chromosome"/>
</dbReference>
<dbReference type="GO" id="GO:0005886">
    <property type="term" value="C:plasma membrane"/>
    <property type="evidence" value="ECO:0007669"/>
    <property type="project" value="UniProtKB-SubCell"/>
</dbReference>
<dbReference type="GO" id="GO:0008556">
    <property type="term" value="F:P-type potassium transmembrane transporter activity"/>
    <property type="evidence" value="ECO:0007669"/>
    <property type="project" value="InterPro"/>
</dbReference>
<dbReference type="GO" id="GO:0030955">
    <property type="term" value="F:potassium ion binding"/>
    <property type="evidence" value="ECO:0007669"/>
    <property type="project" value="UniProtKB-UniRule"/>
</dbReference>
<dbReference type="HAMAP" id="MF_00275">
    <property type="entry name" value="KdpA"/>
    <property type="match status" value="1"/>
</dbReference>
<dbReference type="InterPro" id="IPR004623">
    <property type="entry name" value="KdpA"/>
</dbReference>
<dbReference type="NCBIfam" id="TIGR00680">
    <property type="entry name" value="kdpA"/>
    <property type="match status" value="1"/>
</dbReference>
<dbReference type="PANTHER" id="PTHR30607">
    <property type="entry name" value="POTASSIUM-TRANSPORTING ATPASE A CHAIN"/>
    <property type="match status" value="1"/>
</dbReference>
<dbReference type="PANTHER" id="PTHR30607:SF2">
    <property type="entry name" value="POTASSIUM-TRANSPORTING ATPASE POTASSIUM-BINDING SUBUNIT"/>
    <property type="match status" value="1"/>
</dbReference>
<dbReference type="Pfam" id="PF03814">
    <property type="entry name" value="KdpA"/>
    <property type="match status" value="1"/>
</dbReference>
<dbReference type="PIRSF" id="PIRSF001294">
    <property type="entry name" value="K_ATPaseA"/>
    <property type="match status" value="1"/>
</dbReference>
<accession>C1D7X0</accession>
<reference key="1">
    <citation type="journal article" date="2009" name="PLoS Genet.">
        <title>The complete genome and proteome of Laribacter hongkongensis reveal potential mechanisms for adaptations to different temperatures and habitats.</title>
        <authorList>
            <person name="Woo P.C.Y."/>
            <person name="Lau S.K.P."/>
            <person name="Tse H."/>
            <person name="Teng J.L.L."/>
            <person name="Curreem S.O."/>
            <person name="Tsang A.K.L."/>
            <person name="Fan R.Y.Y."/>
            <person name="Wong G.K.M."/>
            <person name="Huang Y."/>
            <person name="Loman N.J."/>
            <person name="Snyder L.A.S."/>
            <person name="Cai J.J."/>
            <person name="Huang J.-D."/>
            <person name="Mak W."/>
            <person name="Pallen M.J."/>
            <person name="Lok S."/>
            <person name="Yuen K.-Y."/>
        </authorList>
    </citation>
    <scope>NUCLEOTIDE SEQUENCE [LARGE SCALE GENOMIC DNA]</scope>
    <source>
        <strain>HLHK9</strain>
    </source>
</reference>